<sequence length="445" mass="49318">MRLSRYFLPVLKEAPSDAQIVSHQLMLRAGMIRQEAAGIYAWLPLGLRVLKKVERIVREEMDRAGAIELLMPTIQLADLWRESGRYDDYGDEMLRITDRHKRDLLYGPTAEEVVTDIFRASVKSYKDLPKNLYNIQWKFRDERRPRFGVMRGREFLMKDAYSFDLDAEGARKAYNRMFVAYLNLFSRMGLKAVPMRADTGPIGGDLSHEFIVLAETGESAVFCHKDLVEMAAPGPDIDWYGDLQPLVNERTALYAATEEMHDEAAFAALPEGDRLSARGIEVGHIFSFGTKYSEPMKALVTGPDGKDVPVQMGSYGVGVSRLLGAIIEASHDEGGIIWPESVAPFDVGVINMRQGDAACDEACETAYKALQAAGRDVLYDDNDTRGGAKFATMDLIGVPWQLIVGPKGIAEGVVELKNRKTGERHSAPLAEVIAQLSAQNPGKAA</sequence>
<dbReference type="EC" id="6.1.1.15" evidence="1"/>
<dbReference type="EMBL" id="CP000927">
    <property type="protein sequence ID" value="ABZ71939.1"/>
    <property type="molecule type" value="Genomic_DNA"/>
</dbReference>
<dbReference type="SMR" id="B0SZ28"/>
<dbReference type="STRING" id="366602.Caul_2812"/>
<dbReference type="KEGG" id="cak:Caul_2812"/>
<dbReference type="eggNOG" id="COG0442">
    <property type="taxonomic scope" value="Bacteria"/>
</dbReference>
<dbReference type="HOGENOM" id="CLU_016739_4_2_5"/>
<dbReference type="OrthoDB" id="9809052at2"/>
<dbReference type="GO" id="GO:0005829">
    <property type="term" value="C:cytosol"/>
    <property type="evidence" value="ECO:0007669"/>
    <property type="project" value="TreeGrafter"/>
</dbReference>
<dbReference type="GO" id="GO:0005524">
    <property type="term" value="F:ATP binding"/>
    <property type="evidence" value="ECO:0007669"/>
    <property type="project" value="UniProtKB-UniRule"/>
</dbReference>
<dbReference type="GO" id="GO:0004827">
    <property type="term" value="F:proline-tRNA ligase activity"/>
    <property type="evidence" value="ECO:0007669"/>
    <property type="project" value="UniProtKB-UniRule"/>
</dbReference>
<dbReference type="GO" id="GO:0006433">
    <property type="term" value="P:prolyl-tRNA aminoacylation"/>
    <property type="evidence" value="ECO:0007669"/>
    <property type="project" value="UniProtKB-UniRule"/>
</dbReference>
<dbReference type="CDD" id="cd00861">
    <property type="entry name" value="ProRS_anticodon_short"/>
    <property type="match status" value="1"/>
</dbReference>
<dbReference type="CDD" id="cd00779">
    <property type="entry name" value="ProRS_core_prok"/>
    <property type="match status" value="1"/>
</dbReference>
<dbReference type="FunFam" id="3.30.930.10:FF:000042">
    <property type="entry name" value="probable proline--tRNA ligase, mitochondrial"/>
    <property type="match status" value="1"/>
</dbReference>
<dbReference type="FunFam" id="3.40.50.800:FF:000032">
    <property type="entry name" value="Proline--tRNA ligase"/>
    <property type="match status" value="1"/>
</dbReference>
<dbReference type="Gene3D" id="3.40.50.800">
    <property type="entry name" value="Anticodon-binding domain"/>
    <property type="match status" value="1"/>
</dbReference>
<dbReference type="Gene3D" id="3.30.930.10">
    <property type="entry name" value="Bira Bifunctional Protein, Domain 2"/>
    <property type="match status" value="1"/>
</dbReference>
<dbReference type="HAMAP" id="MF_01570">
    <property type="entry name" value="Pro_tRNA_synth_type2"/>
    <property type="match status" value="1"/>
</dbReference>
<dbReference type="InterPro" id="IPR002314">
    <property type="entry name" value="aa-tRNA-synt_IIb"/>
</dbReference>
<dbReference type="InterPro" id="IPR006195">
    <property type="entry name" value="aa-tRNA-synth_II"/>
</dbReference>
<dbReference type="InterPro" id="IPR045864">
    <property type="entry name" value="aa-tRNA-synth_II/BPL/LPL"/>
</dbReference>
<dbReference type="InterPro" id="IPR004154">
    <property type="entry name" value="Anticodon-bd"/>
</dbReference>
<dbReference type="InterPro" id="IPR036621">
    <property type="entry name" value="Anticodon-bd_dom_sf"/>
</dbReference>
<dbReference type="InterPro" id="IPR002316">
    <property type="entry name" value="Pro-tRNA-ligase_IIa"/>
</dbReference>
<dbReference type="InterPro" id="IPR004500">
    <property type="entry name" value="Pro-tRNA-synth_IIa_bac-type"/>
</dbReference>
<dbReference type="InterPro" id="IPR050062">
    <property type="entry name" value="Pro-tRNA_synthetase"/>
</dbReference>
<dbReference type="InterPro" id="IPR023716">
    <property type="entry name" value="Prolyl-tRNA_ligase_IIa_type2"/>
</dbReference>
<dbReference type="InterPro" id="IPR044140">
    <property type="entry name" value="ProRS_anticodon_short"/>
</dbReference>
<dbReference type="InterPro" id="IPR033730">
    <property type="entry name" value="ProRS_core_prok"/>
</dbReference>
<dbReference type="NCBIfam" id="NF008979">
    <property type="entry name" value="PRK12325.1"/>
    <property type="match status" value="1"/>
</dbReference>
<dbReference type="NCBIfam" id="TIGR00409">
    <property type="entry name" value="proS_fam_II"/>
    <property type="match status" value="1"/>
</dbReference>
<dbReference type="PANTHER" id="PTHR42753">
    <property type="entry name" value="MITOCHONDRIAL RIBOSOME PROTEIN L39/PROLYL-TRNA LIGASE FAMILY MEMBER"/>
    <property type="match status" value="1"/>
</dbReference>
<dbReference type="PANTHER" id="PTHR42753:SF2">
    <property type="entry name" value="PROLINE--TRNA LIGASE"/>
    <property type="match status" value="1"/>
</dbReference>
<dbReference type="Pfam" id="PF03129">
    <property type="entry name" value="HGTP_anticodon"/>
    <property type="match status" value="1"/>
</dbReference>
<dbReference type="Pfam" id="PF00587">
    <property type="entry name" value="tRNA-synt_2b"/>
    <property type="match status" value="1"/>
</dbReference>
<dbReference type="PRINTS" id="PR01046">
    <property type="entry name" value="TRNASYNTHPRO"/>
</dbReference>
<dbReference type="SUPFAM" id="SSF52954">
    <property type="entry name" value="Class II aaRS ABD-related"/>
    <property type="match status" value="1"/>
</dbReference>
<dbReference type="SUPFAM" id="SSF55681">
    <property type="entry name" value="Class II aaRS and biotin synthetases"/>
    <property type="match status" value="1"/>
</dbReference>
<dbReference type="PROSITE" id="PS50862">
    <property type="entry name" value="AA_TRNA_LIGASE_II"/>
    <property type="match status" value="1"/>
</dbReference>
<feature type="chain" id="PRO_1000087863" description="Proline--tRNA ligase">
    <location>
        <begin position="1"/>
        <end position="445"/>
    </location>
</feature>
<evidence type="ECO:0000255" key="1">
    <source>
        <dbReference type="HAMAP-Rule" id="MF_01570"/>
    </source>
</evidence>
<proteinExistence type="inferred from homology"/>
<comment type="function">
    <text evidence="1">Catalyzes the attachment of proline to tRNA(Pro) in a two-step reaction: proline is first activated by ATP to form Pro-AMP and then transferred to the acceptor end of tRNA(Pro).</text>
</comment>
<comment type="catalytic activity">
    <reaction evidence="1">
        <text>tRNA(Pro) + L-proline + ATP = L-prolyl-tRNA(Pro) + AMP + diphosphate</text>
        <dbReference type="Rhea" id="RHEA:14305"/>
        <dbReference type="Rhea" id="RHEA-COMP:9700"/>
        <dbReference type="Rhea" id="RHEA-COMP:9702"/>
        <dbReference type="ChEBI" id="CHEBI:30616"/>
        <dbReference type="ChEBI" id="CHEBI:33019"/>
        <dbReference type="ChEBI" id="CHEBI:60039"/>
        <dbReference type="ChEBI" id="CHEBI:78442"/>
        <dbReference type="ChEBI" id="CHEBI:78532"/>
        <dbReference type="ChEBI" id="CHEBI:456215"/>
        <dbReference type="EC" id="6.1.1.15"/>
    </reaction>
</comment>
<comment type="subunit">
    <text evidence="1">Homodimer.</text>
</comment>
<comment type="subcellular location">
    <subcellularLocation>
        <location evidence="1">Cytoplasm</location>
    </subcellularLocation>
</comment>
<comment type="similarity">
    <text evidence="1">Belongs to the class-II aminoacyl-tRNA synthetase family. ProS type 2 subfamily.</text>
</comment>
<reference key="1">
    <citation type="submission" date="2008-01" db="EMBL/GenBank/DDBJ databases">
        <title>Complete sequence of chromosome of Caulobacter sp. K31.</title>
        <authorList>
            <consortium name="US DOE Joint Genome Institute"/>
            <person name="Copeland A."/>
            <person name="Lucas S."/>
            <person name="Lapidus A."/>
            <person name="Barry K."/>
            <person name="Glavina del Rio T."/>
            <person name="Dalin E."/>
            <person name="Tice H."/>
            <person name="Pitluck S."/>
            <person name="Bruce D."/>
            <person name="Goodwin L."/>
            <person name="Thompson L.S."/>
            <person name="Brettin T."/>
            <person name="Detter J.C."/>
            <person name="Han C."/>
            <person name="Schmutz J."/>
            <person name="Larimer F."/>
            <person name="Land M."/>
            <person name="Hauser L."/>
            <person name="Kyrpides N."/>
            <person name="Kim E."/>
            <person name="Stephens C."/>
            <person name="Richardson P."/>
        </authorList>
    </citation>
    <scope>NUCLEOTIDE SEQUENCE [LARGE SCALE GENOMIC DNA]</scope>
    <source>
        <strain>K31</strain>
    </source>
</reference>
<gene>
    <name evidence="1" type="primary">proS</name>
    <name type="ordered locus">Caul_2812</name>
</gene>
<keyword id="KW-0030">Aminoacyl-tRNA synthetase</keyword>
<keyword id="KW-0067">ATP-binding</keyword>
<keyword id="KW-0963">Cytoplasm</keyword>
<keyword id="KW-0436">Ligase</keyword>
<keyword id="KW-0547">Nucleotide-binding</keyword>
<keyword id="KW-0648">Protein biosynthesis</keyword>
<accession>B0SZ28</accession>
<name>SYP_CAUSK</name>
<organism>
    <name type="scientific">Caulobacter sp. (strain K31)</name>
    <dbReference type="NCBI Taxonomy" id="366602"/>
    <lineage>
        <taxon>Bacteria</taxon>
        <taxon>Pseudomonadati</taxon>
        <taxon>Pseudomonadota</taxon>
        <taxon>Alphaproteobacteria</taxon>
        <taxon>Caulobacterales</taxon>
        <taxon>Caulobacteraceae</taxon>
        <taxon>Caulobacter</taxon>
    </lineage>
</organism>
<protein>
    <recommendedName>
        <fullName evidence="1">Proline--tRNA ligase</fullName>
        <ecNumber evidence="1">6.1.1.15</ecNumber>
    </recommendedName>
    <alternativeName>
        <fullName evidence="1">Prolyl-tRNA synthetase</fullName>
        <shortName evidence="1">ProRS</shortName>
    </alternativeName>
</protein>